<sequence>MNIRPLHDRVIVKRSEVESKSAGGIVLTGSAAEQSSRGEVLAVGNGRILENGSVMALDVKVGDIVIFNEGYGVKKEKIDGEEVLILSESDLMAVVG</sequence>
<proteinExistence type="inferred from homology"/>
<organism>
    <name type="scientific">Shewanella piezotolerans (strain WP3 / JCM 13877)</name>
    <dbReference type="NCBI Taxonomy" id="225849"/>
    <lineage>
        <taxon>Bacteria</taxon>
        <taxon>Pseudomonadati</taxon>
        <taxon>Pseudomonadota</taxon>
        <taxon>Gammaproteobacteria</taxon>
        <taxon>Alteromonadales</taxon>
        <taxon>Shewanellaceae</taxon>
        <taxon>Shewanella</taxon>
    </lineage>
</organism>
<accession>B8CID2</accession>
<name>CH10_SHEPW</name>
<feature type="chain" id="PRO_1000129705" description="Co-chaperonin GroES">
    <location>
        <begin position="1"/>
        <end position="96"/>
    </location>
</feature>
<gene>
    <name evidence="1" type="primary">groES</name>
    <name evidence="1" type="synonym">groS</name>
    <name type="ordered locus">swp_0584</name>
</gene>
<comment type="function">
    <text evidence="1">Together with the chaperonin GroEL, plays an essential role in assisting protein folding. The GroEL-GroES system forms a nano-cage that allows encapsulation of the non-native substrate proteins and provides a physical environment optimized to promote and accelerate protein folding. GroES binds to the apical surface of the GroEL ring, thereby capping the opening of the GroEL channel.</text>
</comment>
<comment type="subunit">
    <text evidence="1">Heptamer of 7 subunits arranged in a ring. Interacts with the chaperonin GroEL.</text>
</comment>
<comment type="subcellular location">
    <subcellularLocation>
        <location evidence="1">Cytoplasm</location>
    </subcellularLocation>
</comment>
<comment type="similarity">
    <text evidence="1">Belongs to the GroES chaperonin family.</text>
</comment>
<evidence type="ECO:0000255" key="1">
    <source>
        <dbReference type="HAMAP-Rule" id="MF_00580"/>
    </source>
</evidence>
<protein>
    <recommendedName>
        <fullName evidence="1">Co-chaperonin GroES</fullName>
    </recommendedName>
    <alternativeName>
        <fullName evidence="1">10 kDa chaperonin</fullName>
    </alternativeName>
    <alternativeName>
        <fullName evidence="1">Chaperonin-10</fullName>
        <shortName evidence="1">Cpn10</shortName>
    </alternativeName>
</protein>
<dbReference type="EMBL" id="CP000472">
    <property type="protein sequence ID" value="ACJ27408.1"/>
    <property type="molecule type" value="Genomic_DNA"/>
</dbReference>
<dbReference type="RefSeq" id="WP_020910789.1">
    <property type="nucleotide sequence ID" value="NC_011566.1"/>
</dbReference>
<dbReference type="SMR" id="B8CID2"/>
<dbReference type="STRING" id="225849.swp_0584"/>
<dbReference type="KEGG" id="swp:swp_0584"/>
<dbReference type="eggNOG" id="COG0234">
    <property type="taxonomic scope" value="Bacteria"/>
</dbReference>
<dbReference type="HOGENOM" id="CLU_132825_1_1_6"/>
<dbReference type="OrthoDB" id="9806791at2"/>
<dbReference type="Proteomes" id="UP000000753">
    <property type="component" value="Chromosome"/>
</dbReference>
<dbReference type="GO" id="GO:0005737">
    <property type="term" value="C:cytoplasm"/>
    <property type="evidence" value="ECO:0007669"/>
    <property type="project" value="UniProtKB-SubCell"/>
</dbReference>
<dbReference type="GO" id="GO:0005524">
    <property type="term" value="F:ATP binding"/>
    <property type="evidence" value="ECO:0007669"/>
    <property type="project" value="InterPro"/>
</dbReference>
<dbReference type="GO" id="GO:0046872">
    <property type="term" value="F:metal ion binding"/>
    <property type="evidence" value="ECO:0007669"/>
    <property type="project" value="TreeGrafter"/>
</dbReference>
<dbReference type="GO" id="GO:0044183">
    <property type="term" value="F:protein folding chaperone"/>
    <property type="evidence" value="ECO:0007669"/>
    <property type="project" value="InterPro"/>
</dbReference>
<dbReference type="GO" id="GO:0051087">
    <property type="term" value="F:protein-folding chaperone binding"/>
    <property type="evidence" value="ECO:0007669"/>
    <property type="project" value="TreeGrafter"/>
</dbReference>
<dbReference type="GO" id="GO:0051082">
    <property type="term" value="F:unfolded protein binding"/>
    <property type="evidence" value="ECO:0007669"/>
    <property type="project" value="TreeGrafter"/>
</dbReference>
<dbReference type="GO" id="GO:0051085">
    <property type="term" value="P:chaperone cofactor-dependent protein refolding"/>
    <property type="evidence" value="ECO:0007669"/>
    <property type="project" value="TreeGrafter"/>
</dbReference>
<dbReference type="CDD" id="cd00320">
    <property type="entry name" value="cpn10"/>
    <property type="match status" value="1"/>
</dbReference>
<dbReference type="FunFam" id="2.30.33.40:FF:000001">
    <property type="entry name" value="10 kDa chaperonin"/>
    <property type="match status" value="1"/>
</dbReference>
<dbReference type="Gene3D" id="2.30.33.40">
    <property type="entry name" value="GroES chaperonin"/>
    <property type="match status" value="1"/>
</dbReference>
<dbReference type="HAMAP" id="MF_00580">
    <property type="entry name" value="CH10"/>
    <property type="match status" value="1"/>
</dbReference>
<dbReference type="InterPro" id="IPR020818">
    <property type="entry name" value="Chaperonin_GroES"/>
</dbReference>
<dbReference type="InterPro" id="IPR037124">
    <property type="entry name" value="Chaperonin_GroES_sf"/>
</dbReference>
<dbReference type="InterPro" id="IPR018369">
    <property type="entry name" value="Chaprnonin_Cpn10_CS"/>
</dbReference>
<dbReference type="InterPro" id="IPR011032">
    <property type="entry name" value="GroES-like_sf"/>
</dbReference>
<dbReference type="NCBIfam" id="NF001526">
    <property type="entry name" value="PRK00364.1-1"/>
    <property type="match status" value="1"/>
</dbReference>
<dbReference type="NCBIfam" id="NF001527">
    <property type="entry name" value="PRK00364.1-2"/>
    <property type="match status" value="1"/>
</dbReference>
<dbReference type="NCBIfam" id="NF001531">
    <property type="entry name" value="PRK00364.2-2"/>
    <property type="match status" value="1"/>
</dbReference>
<dbReference type="PANTHER" id="PTHR10772">
    <property type="entry name" value="10 KDA HEAT SHOCK PROTEIN"/>
    <property type="match status" value="1"/>
</dbReference>
<dbReference type="PANTHER" id="PTHR10772:SF58">
    <property type="entry name" value="CO-CHAPERONIN GROES"/>
    <property type="match status" value="1"/>
</dbReference>
<dbReference type="Pfam" id="PF00166">
    <property type="entry name" value="Cpn10"/>
    <property type="match status" value="1"/>
</dbReference>
<dbReference type="PRINTS" id="PR00297">
    <property type="entry name" value="CHAPERONIN10"/>
</dbReference>
<dbReference type="SMART" id="SM00883">
    <property type="entry name" value="Cpn10"/>
    <property type="match status" value="1"/>
</dbReference>
<dbReference type="SUPFAM" id="SSF50129">
    <property type="entry name" value="GroES-like"/>
    <property type="match status" value="1"/>
</dbReference>
<dbReference type="PROSITE" id="PS00681">
    <property type="entry name" value="CHAPERONINS_CPN10"/>
    <property type="match status" value="1"/>
</dbReference>
<keyword id="KW-0143">Chaperone</keyword>
<keyword id="KW-0963">Cytoplasm</keyword>
<reference key="1">
    <citation type="journal article" date="2008" name="PLoS ONE">
        <title>Environmental adaptation: genomic analysis of the piezotolerant and psychrotolerant deep-sea iron reducing bacterium Shewanella piezotolerans WP3.</title>
        <authorList>
            <person name="Wang F."/>
            <person name="Wang J."/>
            <person name="Jian H."/>
            <person name="Zhang B."/>
            <person name="Li S."/>
            <person name="Wang F."/>
            <person name="Zeng X."/>
            <person name="Gao L."/>
            <person name="Bartlett D.H."/>
            <person name="Yu J."/>
            <person name="Hu S."/>
            <person name="Xiao X."/>
        </authorList>
    </citation>
    <scope>NUCLEOTIDE SEQUENCE [LARGE SCALE GENOMIC DNA]</scope>
    <source>
        <strain>WP3 / JCM 13877</strain>
    </source>
</reference>